<gene>
    <name evidence="3" type="primary">S</name>
</gene>
<keyword id="KW-0007">Acetylation</keyword>
<keyword id="KW-0024">Alternative initiation</keyword>
<keyword id="KW-0025">Alternative splicing</keyword>
<keyword id="KW-1166">Caveolin-mediated endocytosis of virus by host</keyword>
<keyword id="KW-1170">Fusion of virus membrane with host endosomal membrane</keyword>
<keyword id="KW-1168">Fusion of virus membrane with host membrane</keyword>
<keyword id="KW-0325">Glycoprotein</keyword>
<keyword id="KW-0945">Host-virus interaction</keyword>
<keyword id="KW-0449">Lipoprotein</keyword>
<keyword id="KW-0472">Membrane</keyword>
<keyword id="KW-0519">Myristate</keyword>
<keyword id="KW-0812">Transmembrane</keyword>
<keyword id="KW-1133">Transmembrane helix</keyword>
<keyword id="KW-1161">Viral attachment to host cell</keyword>
<keyword id="KW-0261">Viral envelope protein</keyword>
<keyword id="KW-1162">Viral penetration into host cytoplasm</keyword>
<keyword id="KW-0946">Virion</keyword>
<keyword id="KW-1164">Virus endocytosis by host</keyword>
<keyword id="KW-1160">Virus entry into host cell</keyword>
<organismHost>
    <name type="scientific">Marmota monax</name>
    <name type="common">Woodchuck</name>
    <dbReference type="NCBI Taxonomy" id="9995"/>
</organismHost>
<organism>
    <name type="scientific">Woodchuck hepatitis B virus (isolate 2)</name>
    <name type="common">WHV</name>
    <dbReference type="NCBI Taxonomy" id="341946"/>
    <lineage>
        <taxon>Viruses</taxon>
        <taxon>Riboviria</taxon>
        <taxon>Pararnavirae</taxon>
        <taxon>Artverviricota</taxon>
        <taxon>Revtraviricetes</taxon>
        <taxon>Blubervirales</taxon>
        <taxon>Hepadnaviridae</taxon>
        <taxon>Orthohepadnavirus</taxon>
        <taxon>Woodchuck hepatitis virus</taxon>
    </lineage>
</organism>
<dbReference type="EMBL" id="M11082">
    <property type="protein sequence ID" value="AAA19182.1"/>
    <property type="molecule type" value="Unassigned_DNA"/>
</dbReference>
<dbReference type="PIR" id="A03708">
    <property type="entry name" value="SAVLC2"/>
</dbReference>
<dbReference type="SMR" id="P06432"/>
<dbReference type="GlyCosmos" id="P06432">
    <property type="glycosylation" value="2 sites, No reported glycans"/>
</dbReference>
<dbReference type="Proteomes" id="UP000007632">
    <property type="component" value="Genome"/>
</dbReference>
<dbReference type="GO" id="GO:0016020">
    <property type="term" value="C:membrane"/>
    <property type="evidence" value="ECO:0007669"/>
    <property type="project" value="UniProtKB-UniRule"/>
</dbReference>
<dbReference type="GO" id="GO:0019031">
    <property type="term" value="C:viral envelope"/>
    <property type="evidence" value="ECO:0007669"/>
    <property type="project" value="UniProtKB-KW"/>
</dbReference>
<dbReference type="GO" id="GO:0055036">
    <property type="term" value="C:virion membrane"/>
    <property type="evidence" value="ECO:0007669"/>
    <property type="project" value="UniProtKB-SubCell"/>
</dbReference>
<dbReference type="GO" id="GO:0075513">
    <property type="term" value="P:caveolin-mediated endocytosis of virus by host cell"/>
    <property type="evidence" value="ECO:0007669"/>
    <property type="project" value="UniProtKB-KW"/>
</dbReference>
<dbReference type="GO" id="GO:0039654">
    <property type="term" value="P:fusion of virus membrane with host endosome membrane"/>
    <property type="evidence" value="ECO:0007669"/>
    <property type="project" value="UniProtKB-KW"/>
</dbReference>
<dbReference type="GO" id="GO:0019062">
    <property type="term" value="P:virion attachment to host cell"/>
    <property type="evidence" value="ECO:0007669"/>
    <property type="project" value="UniProtKB-UniRule"/>
</dbReference>
<dbReference type="HAMAP" id="MF_04075">
    <property type="entry name" value="HBV_HBSAG"/>
    <property type="match status" value="1"/>
</dbReference>
<dbReference type="InterPro" id="IPR000349">
    <property type="entry name" value="HBV_HBSAG"/>
</dbReference>
<dbReference type="Pfam" id="PF00695">
    <property type="entry name" value="vMSA"/>
    <property type="match status" value="1"/>
</dbReference>
<comment type="function">
    <text evidence="3">The large envelope protein exists in two topological conformations, one which is termed 'external' or Le-HBsAg and the other 'internal' or Li-HBsAg. In its external conformation the protein attaches the virus to cell receptors and thereby initiating infection. This interaction determines the species specificity and liver tropism. This attachment induces virion internalization predominantly through caveolin-mediated endocytosis. The large envelope protein also assures fusion between virion membrane and endosomal membrane. In its internal conformation the protein plays a role in virion morphogenesis and mediates the contact with the nucleocapsid like a matrix protein.</text>
</comment>
<comment type="function">
    <text evidence="3">The middle envelope protein plays an important role in the budding of the virion. It is involved in the induction of budding in a nucleocapsid independent way. In this process the majority of envelope proteins bud to form subviral lipoprotein particles of 22 nm of diameter that do not contain a nucleocapsid.</text>
</comment>
<comment type="subunit">
    <molecule>Isoform L</molecule>
    <text evidence="2">In its internal form (Li-HBsAg), interacts with the capsid protein and with the isoform S. Interacts with host chaperone CANX.</text>
</comment>
<comment type="subunit">
    <molecule>Isoform M</molecule>
    <text evidence="2">Associates with host chaperone CANX through its pre-S2 N glycan; this association may be essential for isoform M proper secretion.</text>
</comment>
<comment type="subunit">
    <molecule>Isoform S</molecule>
    <text evidence="2">Interacts with isoform L. Interacts with the antigens of satellite virus HDV (HDVAgs); this interaction is required for encapsidation of HDV genomic RNA.</text>
</comment>
<comment type="subcellular location">
    <subcellularLocation>
        <location evidence="3">Virion membrane</location>
    </subcellularLocation>
</comment>
<comment type="alternative products">
    <event type="alternative splicing"/>
    <event type="alternative initiation"/>
    <isoform>
        <id>P06432-1</id>
        <name>L</name>
        <name>Large envelope protein</name>
        <name>LHB</name>
        <name>L-HBsAg</name>
        <sequence type="displayed"/>
    </isoform>
    <isoform>
        <id>P06432-2</id>
        <name>M</name>
        <name>Middle envelope protein</name>
        <name>MHB</name>
        <name>M-HBsAg</name>
        <sequence type="described" ref="VSP_031457"/>
    </isoform>
    <isoform>
        <id>P06432-3</id>
        <name>S</name>
        <name>Small envelope protein</name>
        <name>SHB</name>
        <name>S-HBsAg</name>
        <sequence type="described" ref="VSP_031456"/>
    </isoform>
</comment>
<comment type="domain">
    <text evidence="3">The large envelope protein is synthesized with the pre-S region at the cytosolic side of the endoplasmic reticulum and, hence will be within the virion after budding. Therefore the pre-S region is not N-glycosylated. Later a post-translational translocation of N-terminal pre-S and TM1 domains occur in about 50% of proteins at the virion surface. These molecules change their topology by an unknown mechanism, resulting in exposure of pre-S region at virion surface. For isoform M in contrast, the pre-S2 region is translocated cotranslationally to the endoplasmic reticulum lumen and is N-glycosylated.</text>
</comment>
<comment type="PTM">
    <text evidence="3">Isoform M is N-terminally acetylated by host at a ratio of 90%, and N-glycosylated by host at the pre-S2 region.</text>
</comment>
<comment type="PTM">
    <text evidence="3">Myristoylated.</text>
</comment>
<comment type="similarity">
    <text evidence="3">Belongs to the orthohepadnavirus major surface antigen family.</text>
</comment>
<feature type="initiator methionine" description="Removed; by host" evidence="3">
    <location>
        <position position="1"/>
    </location>
</feature>
<feature type="chain" id="PRO_0000038119" description="Large envelope protein" evidence="3">
    <location>
        <begin position="2"/>
        <end position="431"/>
    </location>
</feature>
<feature type="topological domain" description="Intravirion; in internal conformation" evidence="3">
    <location>
        <begin position="2"/>
        <end position="286"/>
    </location>
</feature>
<feature type="topological domain" description="Virion surface; in external conformation" evidence="3">
    <location>
        <begin position="2"/>
        <end position="214"/>
    </location>
</feature>
<feature type="transmembrane region" description="Helical; Name=TM1; Note=In external conformation" evidence="3">
    <location>
        <begin position="215"/>
        <end position="235"/>
    </location>
</feature>
<feature type="topological domain" description="Intravirion; in external conformation" evidence="3">
    <location>
        <begin position="236"/>
        <end position="286"/>
    </location>
</feature>
<feature type="transmembrane region" description="Helical; Name=TM2" evidence="3">
    <location>
        <begin position="287"/>
        <end position="307"/>
    </location>
</feature>
<feature type="topological domain" description="Virion surface" evidence="3">
    <location>
        <begin position="308"/>
        <end position="379"/>
    </location>
</feature>
<feature type="transmembrane region" description="Helical" evidence="3">
    <location>
        <begin position="380"/>
        <end position="400"/>
    </location>
</feature>
<feature type="topological domain" description="Intravirion" evidence="3">
    <location>
        <begin position="401"/>
        <end position="406"/>
    </location>
</feature>
<feature type="transmembrane region" description="Helical; Name=TM3" evidence="3">
    <location>
        <begin position="407"/>
        <end position="429"/>
    </location>
</feature>
<feature type="topological domain" description="Virion surface" evidence="3">
    <location>
        <begin position="430"/>
        <end position="431"/>
    </location>
</feature>
<feature type="region of interest" description="Pre-S" evidence="3">
    <location>
        <begin position="2"/>
        <end position="207"/>
    </location>
</feature>
<feature type="region of interest" description="Pre-S1" evidence="3">
    <location>
        <begin position="2"/>
        <end position="148"/>
    </location>
</feature>
<feature type="region of interest" description="Disordered" evidence="4">
    <location>
        <begin position="115"/>
        <end position="147"/>
    </location>
</feature>
<feature type="region of interest" description="Pre-S2" evidence="3">
    <location>
        <begin position="149"/>
        <end position="207"/>
    </location>
</feature>
<feature type="lipid moiety-binding region" description="N-myristoyl glycine; by host" evidence="3">
    <location>
        <position position="2"/>
    </location>
</feature>
<feature type="glycosylation site" description="N-linked (GlcNAc...) asparagine; by host" evidence="3">
    <location>
        <position position="351"/>
    </location>
</feature>
<feature type="splice variant" id="VSP_031456" description="In isoform S." evidence="5">
    <location>
        <begin position="1"/>
        <end position="209"/>
    </location>
</feature>
<feature type="splice variant" id="VSP_031457" description="In isoform M." evidence="5">
    <location>
        <begin position="1"/>
        <end position="149"/>
    </location>
</feature>
<feature type="glycosylation site" description="N-linked (GlcNAc...) asparagine" evidence="1">
    <location sequence="P06432-2">
        <position position="3"/>
    </location>
</feature>
<proteinExistence type="inferred from homology"/>
<name>HBSAG_WHV2</name>
<sequence length="431" mass="48954">MGNNIKVTFNPDKIAAWWPAVGTYYTTTYPQNQSVFQPGIYQTTSLINPKNQQELDSVLINRYKQIDWNTWQGFPVDQKFSLVSRDPPPKPYINQSAQTFEIKPGPIIVPGIRDIPRGLVPPQTPTNRDQGRKPTPPTPPLRDTHPHLTMKNQTFHLQGFVDGLRDLTTTERQHNAYRDPFTTLSPAVPTVSTILSPPSTTGDPALSPEMSPSSLLGLLAGLQVVYFLWTKILTIAQNLDWWCTSLSFPGGIPECTGQNSQFQTCKHLPTSCPPTCNGFRWMYLRRFIIYLLVLLLCLIFLLVLLDWKGLIPVCPLQPTTETTVNCRQCTISAQDMYTPPYCCCLKPTAGNCTCWPIPSSWALGNYLWEWALARLSWLNLLVPLLQWLGGISLIAWFLLIWMIWFWGPALLSILPPFIPIFVLFFLIWVYI</sequence>
<protein>
    <recommendedName>
        <fullName evidence="3">Large envelope protein</fullName>
    </recommendedName>
    <alternativeName>
        <fullName evidence="3">L glycoprotein</fullName>
    </alternativeName>
    <alternativeName>
        <fullName evidence="3">L-HBsAg</fullName>
        <shortName evidence="3">LHB</shortName>
    </alternativeName>
    <alternativeName>
        <fullName evidence="3">Large S protein</fullName>
    </alternativeName>
    <alternativeName>
        <fullName evidence="3">Large surface protein</fullName>
    </alternativeName>
    <alternativeName>
        <fullName evidence="3">Major surface antigen</fullName>
    </alternativeName>
</protein>
<reference key="1">
    <citation type="journal article" date="1985" name="J. Virol.">
        <title>Nucleotide sequence of a cloned woodchuck hepatitis virus genome: evolutional relationship between hepadnaviruses.</title>
        <authorList>
            <person name="Kodama K."/>
            <person name="Ogasawara N."/>
            <person name="Yoshikawa H."/>
            <person name="Murakami S."/>
        </authorList>
    </citation>
    <scope>NUCLEOTIDE SEQUENCE [GENOMIC DNA]</scope>
</reference>
<reference key="2">
    <citation type="journal article" date="1996" name="Intervirology">
        <title>Functions of the large hepatitis B virus surface protein in viral particle morphogenesis.</title>
        <authorList>
            <person name="Bruss V."/>
            <person name="Gerhardt E."/>
            <person name="Vieluf K."/>
            <person name="Wunderlich G."/>
        </authorList>
    </citation>
    <scope>REVIEW</scope>
</reference>
<reference key="3">
    <citation type="journal article" date="1998" name="Adv. Exp. Med. Biol.">
        <title>Role of glycan processing in hepatitis B virus envelope protein trafficking.</title>
        <authorList>
            <person name="Block T.M."/>
            <person name="Lu X."/>
            <person name="Mehta A."/>
            <person name="Park J."/>
            <person name="Blumberg B.S."/>
            <person name="Dwek R."/>
        </authorList>
    </citation>
    <scope>REVIEW</scope>
</reference>
<reference key="4">
    <citation type="journal article" date="2004" name="Virus Res.">
        <title>Envelopment of the hepatitis B virus nucleocapsid.</title>
        <authorList>
            <person name="Bruss V."/>
        </authorList>
    </citation>
    <scope>REVIEW</scope>
</reference>
<reference key="5">
    <citation type="journal article" date="2006" name="Cancer Sci.">
        <title>Hepatitis B virus pre-S mutants, endoplasmic reticulum stress and hepatocarcinogenesis.</title>
        <authorList>
            <person name="Wang H.C."/>
            <person name="Huang W."/>
            <person name="Lai M.D."/>
            <person name="Su I.J."/>
        </authorList>
    </citation>
    <scope>REVIEW</scope>
</reference>
<evidence type="ECO:0000250" key="1">
    <source>
        <dbReference type="UniProtKB" id="P03138"/>
    </source>
</evidence>
<evidence type="ECO:0000250" key="2">
    <source>
        <dbReference type="UniProtKB" id="P03141"/>
    </source>
</evidence>
<evidence type="ECO:0000255" key="3">
    <source>
        <dbReference type="HAMAP-Rule" id="MF_04075"/>
    </source>
</evidence>
<evidence type="ECO:0000256" key="4">
    <source>
        <dbReference type="SAM" id="MobiDB-lite"/>
    </source>
</evidence>
<evidence type="ECO:0000305" key="5"/>
<accession>P06432</accession>